<gene>
    <name evidence="1" type="primary">ileS</name>
    <name type="ordered locus">BbuZS7_0862</name>
</gene>
<protein>
    <recommendedName>
        <fullName evidence="1">Isoleucine--tRNA ligase</fullName>
        <ecNumber evidence="1">6.1.1.5</ecNumber>
    </recommendedName>
    <alternativeName>
        <fullName evidence="1">Isoleucyl-tRNA synthetase</fullName>
        <shortName evidence="1">IleRS</shortName>
    </alternativeName>
</protein>
<reference key="1">
    <citation type="journal article" date="2011" name="J. Bacteriol.">
        <title>Whole-genome sequences of thirteen isolates of Borrelia burgdorferi.</title>
        <authorList>
            <person name="Schutzer S.E."/>
            <person name="Fraser-Liggett C.M."/>
            <person name="Casjens S.R."/>
            <person name="Qiu W.G."/>
            <person name="Dunn J.J."/>
            <person name="Mongodin E.F."/>
            <person name="Luft B.J."/>
        </authorList>
    </citation>
    <scope>NUCLEOTIDE SEQUENCE [LARGE SCALE GENOMIC DNA]</scope>
    <source>
        <strain>ZS7</strain>
    </source>
</reference>
<sequence>MFKKVENKANFPKIEEKILKFWNDNKIFEKSIKQREGCEEFTFYDGPPFATGLPHFGHFVPNTIKDIIPRYQTMQGKYVKRNFGWDTHGLPVEYEVEKKLGISGKYEIENYGIENFNKECRKIVLRYTEEWKNIILRLGRWVDFEKGYKTMDISFMESVWWVFKNLYEKGLIYESYYVLPYSPKLATPLSNFEVNLGEYKEVNDPSLTIKFKIKDKNEYLLVWTTTPWTLPSNLGIAVGQEIEYSKIFDKTKEEILILGSKKLNSYYDDENSYTIIEKFKGSKLEGIEYEPIFNYFLEQKDKGAFKVHTADYVTTDDGTGIVHIAPFGEEDYKILKKHTNVDIIDPLDAECKFTNQVKDFKGLFVKDADKKIIENLKLRNFLFKRENYLHRYPFCYRTNCPIIYRPISSWFVNVEKIKTKLLEVNEKINWMPAHLKKGRFGKWLENAKDWAISRNRFWGNPIPIWICSKTGKKICIGSKKELENLSGQKIEDLHKDQIDKITWPSKDGGKFIRTSEVLDCWFESGAMPYASNHYPFTNEINFKNIFPADFIAEGLDQTRGWFYTLTILGTALFENTAFKNVIVNGLVLSSDGRKMSKSFKNYTDPMQVINTFGADALRLYLIMSPVVKADDLKYSDNGVRDVLKNIIIPIWNAYSFFTTYAIIDKFKPPKNISLAKNNNLDKWIISELESLKKILNTEIDKYNLTKSIESLLEFIDKLNNWYIRRSRRRFWKSENDKDKNDAYETLYYAIKTLMILLAPFIPFITEEIYQNLKTDEDKQSIHLNDYPKANENFINKTIEEKINLARKITSMARSLRSLHNIKIRMPISTIYIVTKNQNEQNMLMEMQEIILDEINAKEMKIKANEEELITYKAKANFKELGKKLGKDMKAVSAEISKLKNEDIIKIINGTSYEIKVANAKHYLSLNDIILEREEKENLKVINEESITIGIDSLITKELYLEGLTREFVRQIQNLRKEKNFDVSDRINLYIENSETLKEMLNKFEKYIKTETLALNIILNKSKLEKKINLADDIFTLIGIEKC</sequence>
<accession>B7J0S6</accession>
<proteinExistence type="inferred from homology"/>
<evidence type="ECO:0000255" key="1">
    <source>
        <dbReference type="HAMAP-Rule" id="MF_02003"/>
    </source>
</evidence>
<name>SYI_BORBZ</name>
<keyword id="KW-0030">Aminoacyl-tRNA synthetase</keyword>
<keyword id="KW-0067">ATP-binding</keyword>
<keyword id="KW-0963">Cytoplasm</keyword>
<keyword id="KW-0436">Ligase</keyword>
<keyword id="KW-0479">Metal-binding</keyword>
<keyword id="KW-0547">Nucleotide-binding</keyword>
<keyword id="KW-0648">Protein biosynthesis</keyword>
<keyword id="KW-0862">Zinc</keyword>
<feature type="chain" id="PRO_1000216248" description="Isoleucine--tRNA ligase">
    <location>
        <begin position="1"/>
        <end position="1042"/>
    </location>
</feature>
<feature type="short sequence motif" description="'HIGH' region">
    <location>
        <begin position="48"/>
        <end position="58"/>
    </location>
</feature>
<feature type="short sequence motif" description="'KMSKS' region">
    <location>
        <begin position="594"/>
        <end position="598"/>
    </location>
</feature>
<feature type="binding site" evidence="1">
    <location>
        <position position="597"/>
    </location>
    <ligand>
        <name>ATP</name>
        <dbReference type="ChEBI" id="CHEBI:30616"/>
    </ligand>
</feature>
<organism>
    <name type="scientific">Borreliella burgdorferi (strain ZS7)</name>
    <name type="common">Borrelia burgdorferi</name>
    <dbReference type="NCBI Taxonomy" id="445985"/>
    <lineage>
        <taxon>Bacteria</taxon>
        <taxon>Pseudomonadati</taxon>
        <taxon>Spirochaetota</taxon>
        <taxon>Spirochaetia</taxon>
        <taxon>Spirochaetales</taxon>
        <taxon>Borreliaceae</taxon>
        <taxon>Borreliella</taxon>
    </lineage>
</organism>
<comment type="function">
    <text evidence="1">Catalyzes the attachment of isoleucine to tRNA(Ile). As IleRS can inadvertently accommodate and process structurally similar amino acids such as valine, to avoid such errors it has two additional distinct tRNA(Ile)-dependent editing activities. One activity is designated as 'pretransfer' editing and involves the hydrolysis of activated Val-AMP. The other activity is designated 'posttransfer' editing and involves deacylation of mischarged Val-tRNA(Ile).</text>
</comment>
<comment type="catalytic activity">
    <reaction evidence="1">
        <text>tRNA(Ile) + L-isoleucine + ATP = L-isoleucyl-tRNA(Ile) + AMP + diphosphate</text>
        <dbReference type="Rhea" id="RHEA:11060"/>
        <dbReference type="Rhea" id="RHEA-COMP:9666"/>
        <dbReference type="Rhea" id="RHEA-COMP:9695"/>
        <dbReference type="ChEBI" id="CHEBI:30616"/>
        <dbReference type="ChEBI" id="CHEBI:33019"/>
        <dbReference type="ChEBI" id="CHEBI:58045"/>
        <dbReference type="ChEBI" id="CHEBI:78442"/>
        <dbReference type="ChEBI" id="CHEBI:78528"/>
        <dbReference type="ChEBI" id="CHEBI:456215"/>
        <dbReference type="EC" id="6.1.1.5"/>
    </reaction>
</comment>
<comment type="cofactor">
    <cofactor evidence="1">
        <name>Zn(2+)</name>
        <dbReference type="ChEBI" id="CHEBI:29105"/>
    </cofactor>
</comment>
<comment type="subunit">
    <text evidence="1">Monomer.</text>
</comment>
<comment type="subcellular location">
    <subcellularLocation>
        <location evidence="1">Cytoplasm</location>
    </subcellularLocation>
</comment>
<comment type="domain">
    <text evidence="1">IleRS has two distinct active sites: one for aminoacylation and one for editing. The misactivated valine is translocated from the active site to the editing site, which sterically excludes the correctly activated isoleucine. The single editing site contains two valyl binding pockets, one specific for each substrate (Val-AMP or Val-tRNA(Ile)).</text>
</comment>
<comment type="similarity">
    <text evidence="1">Belongs to the class-I aminoacyl-tRNA synthetase family. IleS type 2 subfamily.</text>
</comment>
<dbReference type="EC" id="6.1.1.5" evidence="1"/>
<dbReference type="EMBL" id="CP001205">
    <property type="protein sequence ID" value="ACK74476.1"/>
    <property type="molecule type" value="Genomic_DNA"/>
</dbReference>
<dbReference type="RefSeq" id="WP_002657276.1">
    <property type="nucleotide sequence ID" value="NC_011728.1"/>
</dbReference>
<dbReference type="SMR" id="B7J0S6"/>
<dbReference type="GeneID" id="56567410"/>
<dbReference type="KEGG" id="bbz:BbuZS7_0862"/>
<dbReference type="HOGENOM" id="CLU_001493_1_1_12"/>
<dbReference type="Proteomes" id="UP000006901">
    <property type="component" value="Chromosome"/>
</dbReference>
<dbReference type="GO" id="GO:0005737">
    <property type="term" value="C:cytoplasm"/>
    <property type="evidence" value="ECO:0007669"/>
    <property type="project" value="UniProtKB-SubCell"/>
</dbReference>
<dbReference type="GO" id="GO:0002161">
    <property type="term" value="F:aminoacyl-tRNA deacylase activity"/>
    <property type="evidence" value="ECO:0007669"/>
    <property type="project" value="InterPro"/>
</dbReference>
<dbReference type="GO" id="GO:0005524">
    <property type="term" value="F:ATP binding"/>
    <property type="evidence" value="ECO:0007669"/>
    <property type="project" value="UniProtKB-UniRule"/>
</dbReference>
<dbReference type="GO" id="GO:0004822">
    <property type="term" value="F:isoleucine-tRNA ligase activity"/>
    <property type="evidence" value="ECO:0007669"/>
    <property type="project" value="UniProtKB-UniRule"/>
</dbReference>
<dbReference type="GO" id="GO:0000049">
    <property type="term" value="F:tRNA binding"/>
    <property type="evidence" value="ECO:0007669"/>
    <property type="project" value="InterPro"/>
</dbReference>
<dbReference type="GO" id="GO:0008270">
    <property type="term" value="F:zinc ion binding"/>
    <property type="evidence" value="ECO:0007669"/>
    <property type="project" value="UniProtKB-UniRule"/>
</dbReference>
<dbReference type="GO" id="GO:0006428">
    <property type="term" value="P:isoleucyl-tRNA aminoacylation"/>
    <property type="evidence" value="ECO:0007669"/>
    <property type="project" value="UniProtKB-UniRule"/>
</dbReference>
<dbReference type="CDD" id="cd07961">
    <property type="entry name" value="Anticodon_Ia_Ile_ABEc"/>
    <property type="match status" value="1"/>
</dbReference>
<dbReference type="CDD" id="cd00818">
    <property type="entry name" value="IleRS_core"/>
    <property type="match status" value="1"/>
</dbReference>
<dbReference type="FunFam" id="3.40.50.620:FF:000063">
    <property type="entry name" value="Isoleucine--tRNA ligase"/>
    <property type="match status" value="1"/>
</dbReference>
<dbReference type="FunFam" id="3.40.50.620:FF:000133">
    <property type="entry name" value="Isoleucyl-tRNA synthetase, cytoplasmic"/>
    <property type="match status" value="1"/>
</dbReference>
<dbReference type="Gene3D" id="3.40.50.620">
    <property type="entry name" value="HUPs"/>
    <property type="match status" value="2"/>
</dbReference>
<dbReference type="Gene3D" id="1.10.730.10">
    <property type="entry name" value="Isoleucyl-tRNA Synthetase, Domain 1"/>
    <property type="match status" value="1"/>
</dbReference>
<dbReference type="HAMAP" id="MF_02003">
    <property type="entry name" value="Ile_tRNA_synth_type2"/>
    <property type="match status" value="1"/>
</dbReference>
<dbReference type="InterPro" id="IPR002300">
    <property type="entry name" value="aa-tRNA-synth_Ia"/>
</dbReference>
<dbReference type="InterPro" id="IPR033709">
    <property type="entry name" value="Anticodon_Ile_ABEc"/>
</dbReference>
<dbReference type="InterPro" id="IPR002301">
    <property type="entry name" value="Ile-tRNA-ligase"/>
</dbReference>
<dbReference type="InterPro" id="IPR023586">
    <property type="entry name" value="Ile-tRNA-ligase_type2"/>
</dbReference>
<dbReference type="InterPro" id="IPR013155">
    <property type="entry name" value="M/V/L/I-tRNA-synth_anticd-bd"/>
</dbReference>
<dbReference type="InterPro" id="IPR014729">
    <property type="entry name" value="Rossmann-like_a/b/a_fold"/>
</dbReference>
<dbReference type="InterPro" id="IPR009080">
    <property type="entry name" value="tRNAsynth_Ia_anticodon-bd"/>
</dbReference>
<dbReference type="InterPro" id="IPR009008">
    <property type="entry name" value="Val/Leu/Ile-tRNA-synth_edit"/>
</dbReference>
<dbReference type="NCBIfam" id="TIGR00392">
    <property type="entry name" value="ileS"/>
    <property type="match status" value="1"/>
</dbReference>
<dbReference type="PANTHER" id="PTHR42780:SF1">
    <property type="entry name" value="ISOLEUCINE--TRNA LIGASE, CYTOPLASMIC"/>
    <property type="match status" value="1"/>
</dbReference>
<dbReference type="PANTHER" id="PTHR42780">
    <property type="entry name" value="SOLEUCYL-TRNA SYNTHETASE"/>
    <property type="match status" value="1"/>
</dbReference>
<dbReference type="Pfam" id="PF08264">
    <property type="entry name" value="Anticodon_1"/>
    <property type="match status" value="1"/>
</dbReference>
<dbReference type="Pfam" id="PF19302">
    <property type="entry name" value="DUF5915"/>
    <property type="match status" value="1"/>
</dbReference>
<dbReference type="Pfam" id="PF00133">
    <property type="entry name" value="tRNA-synt_1"/>
    <property type="match status" value="1"/>
</dbReference>
<dbReference type="PRINTS" id="PR00984">
    <property type="entry name" value="TRNASYNTHILE"/>
</dbReference>
<dbReference type="SUPFAM" id="SSF47323">
    <property type="entry name" value="Anticodon-binding domain of a subclass of class I aminoacyl-tRNA synthetases"/>
    <property type="match status" value="2"/>
</dbReference>
<dbReference type="SUPFAM" id="SSF52374">
    <property type="entry name" value="Nucleotidylyl transferase"/>
    <property type="match status" value="1"/>
</dbReference>
<dbReference type="SUPFAM" id="SSF50677">
    <property type="entry name" value="ValRS/IleRS/LeuRS editing domain"/>
    <property type="match status" value="1"/>
</dbReference>